<accession>P0DXV1</accession>
<evidence type="ECO:0000250" key="1">
    <source>
        <dbReference type="UniProtKB" id="A0A0L1JF88"/>
    </source>
</evidence>
<evidence type="ECO:0000250" key="2">
    <source>
        <dbReference type="UniProtKB" id="Q8KZ94"/>
    </source>
</evidence>
<evidence type="ECO:0000269" key="3">
    <source>
    </source>
</evidence>
<evidence type="ECO:0000303" key="4">
    <source>
    </source>
</evidence>
<evidence type="ECO:0000305" key="5"/>
<evidence type="ECO:0000305" key="6">
    <source>
    </source>
</evidence>
<organism>
    <name type="scientific">Aspergillus sclerotiorum</name>
    <dbReference type="NCBI Taxonomy" id="138282"/>
    <lineage>
        <taxon>Eukaryota</taxon>
        <taxon>Fungi</taxon>
        <taxon>Dikarya</taxon>
        <taxon>Ascomycota</taxon>
        <taxon>Pezizomycotina</taxon>
        <taxon>Eurotiomycetes</taxon>
        <taxon>Eurotiomycetidae</taxon>
        <taxon>Eurotiales</taxon>
        <taxon>Aspergillaceae</taxon>
        <taxon>Aspergillus</taxon>
        <taxon>Aspergillus subgen. Circumdati</taxon>
    </lineage>
</organism>
<sequence>MTLQPTAADVGAMYDQYTSLLTDVMAGFIHVGYWEDPSSEETMEVATERMTREVGARLSSSAGQHILDVGCGTGKSAVQIANTHGVQITGITVSKSQIEEAQALYGSAVQAGQVSYQFANAMDLPFADASFDGAYAIESLVHMDDRRTALQNIARVLRPGSRLAIADLCLDAHCPNPEALARFHELFQVPPMSSGEELQELLRETGFRVLEFTDIRDNVRPVCKFLEKKALSLEGEVGEKLLEIATSMATLKELGYAFITAERI</sequence>
<protein>
    <recommendedName>
        <fullName evidence="4">O-methyltransferase resE</fullName>
        <ecNumber evidence="6">2.1.1.-</ecNumber>
    </recommendedName>
    <alternativeName>
        <fullName evidence="4">Restricticin biosynthesis cluster protein E</fullName>
    </alternativeName>
</protein>
<comment type="function">
    <text evidence="1 3">O-methyltransferase; part of the gene cluster that mediates the biosynthesis of the tetrahydropyranyl antifungal agent restricticin that acts as an inhibitor of CYP51 and blocks the ergosterol biosynthesis (PubMed:39105744). Within the pathway, resE uses S-adenosylmethionine to methylate position C4 of desmethylrestrictinol to produce restrictinol (By similarity). The highly reducing polyketide synthase resH, the short chain dehydrogenase resG, the cyclase resF, the FAD-dependent monooxygenase resA and the enoylreductase resD are required to generate the first stable intermediate desmethylrestrictinol. ResH with resD biosynthesize the first polyketide chain intermediate that is reduced by resG, followed by epoxidation by resA before 6-endo cyclization via epoxide opening by resF leads to desmethylrestrictinol. The methyltransferase resE then catalyzes the C4 O-methylation of desmethylrestrictinol to produce restrictinol, and the nonribosomal peptide synthetase resC catalyzes the C3 esterification of restrictinol with glycine that leads to restricticin (By similarity).</text>
</comment>
<comment type="catalytic activity">
    <reaction evidence="6">
        <text>desmethylrestrictinol + S-adenosyl-L-methionine = restrictinol + S-adenosyl-L-homocysteine + H(+)</text>
        <dbReference type="Rhea" id="RHEA:81531"/>
        <dbReference type="ChEBI" id="CHEBI:15378"/>
        <dbReference type="ChEBI" id="CHEBI:57856"/>
        <dbReference type="ChEBI" id="CHEBI:59789"/>
        <dbReference type="ChEBI" id="CHEBI:231922"/>
        <dbReference type="ChEBI" id="CHEBI:231923"/>
    </reaction>
    <physiologicalReaction direction="left-to-right" evidence="6">
        <dbReference type="Rhea" id="RHEA:81532"/>
    </physiologicalReaction>
</comment>
<comment type="pathway">
    <text evidence="3">Antifungal biosynthesis.</text>
</comment>
<comment type="similarity">
    <text evidence="5">Belongs to the methyltransferase superfamily.</text>
</comment>
<gene>
    <name evidence="4" type="primary">resE</name>
</gene>
<proteinExistence type="inferred from homology"/>
<name>RESE_ASPSL</name>
<keyword id="KW-0489">Methyltransferase</keyword>
<keyword id="KW-0949">S-adenosyl-L-methionine</keyword>
<keyword id="KW-0808">Transferase</keyword>
<dbReference type="EC" id="2.1.1.-" evidence="6"/>
<dbReference type="GO" id="GO:0008757">
    <property type="term" value="F:S-adenosylmethionine-dependent methyltransferase activity"/>
    <property type="evidence" value="ECO:0007669"/>
    <property type="project" value="InterPro"/>
</dbReference>
<dbReference type="GO" id="GO:0032259">
    <property type="term" value="P:methylation"/>
    <property type="evidence" value="ECO:0007669"/>
    <property type="project" value="UniProtKB-KW"/>
</dbReference>
<dbReference type="CDD" id="cd02440">
    <property type="entry name" value="AdoMet_MTases"/>
    <property type="match status" value="1"/>
</dbReference>
<dbReference type="Gene3D" id="3.40.50.150">
    <property type="entry name" value="Vaccinia Virus protein VP39"/>
    <property type="match status" value="1"/>
</dbReference>
<dbReference type="InterPro" id="IPR050447">
    <property type="entry name" value="Erg6_SMT_methyltransf"/>
</dbReference>
<dbReference type="InterPro" id="IPR020803">
    <property type="entry name" value="MeTfrase_dom"/>
</dbReference>
<dbReference type="InterPro" id="IPR013216">
    <property type="entry name" value="Methyltransf_11"/>
</dbReference>
<dbReference type="InterPro" id="IPR029063">
    <property type="entry name" value="SAM-dependent_MTases_sf"/>
</dbReference>
<dbReference type="PANTHER" id="PTHR44068:SF11">
    <property type="entry name" value="GERANYL DIPHOSPHATE 2-C-METHYLTRANSFERASE"/>
    <property type="match status" value="1"/>
</dbReference>
<dbReference type="PANTHER" id="PTHR44068">
    <property type="entry name" value="ZGC:194242"/>
    <property type="match status" value="1"/>
</dbReference>
<dbReference type="Pfam" id="PF08241">
    <property type="entry name" value="Methyltransf_11"/>
    <property type="match status" value="1"/>
</dbReference>
<dbReference type="SMART" id="SM00828">
    <property type="entry name" value="PKS_MT"/>
    <property type="match status" value="1"/>
</dbReference>
<dbReference type="SUPFAM" id="SSF53335">
    <property type="entry name" value="S-adenosyl-L-methionine-dependent methyltransferases"/>
    <property type="match status" value="1"/>
</dbReference>
<feature type="chain" id="PRO_0000461537" description="O-methyltransferase resE">
    <location>
        <begin position="1"/>
        <end position="264"/>
    </location>
</feature>
<feature type="binding site" evidence="2">
    <location>
        <position position="97"/>
    </location>
    <ligand>
        <name>S-adenosyl-L-methionine</name>
        <dbReference type="ChEBI" id="CHEBI:59789"/>
    </ligand>
</feature>
<feature type="binding site" evidence="2">
    <location>
        <position position="142"/>
    </location>
    <ligand>
        <name>S-adenosyl-L-methionine</name>
        <dbReference type="ChEBI" id="CHEBI:59789"/>
    </ligand>
</feature>
<reference key="1">
    <citation type="journal article" date="2024" name="J. Agric. Food Chem.">
        <title>Discovery of a hybrid molecule with phytotoxic activity by genome mining, heterologous expression, and OSMAC strategy.</title>
        <authorList>
            <person name="Lu Y."/>
            <person name="Li Y."/>
            <person name="Dou M."/>
            <person name="Liu D."/>
            <person name="Lin W."/>
            <person name="Fan A."/>
        </authorList>
    </citation>
    <scope>NUCLEOTIDE SEQUENCE [GENOMIC DNA]</scope>
    <scope>FUNCTION</scope>
    <scope>PATHWAY</scope>
</reference>